<reference key="1">
    <citation type="journal article" date="1999" name="Nature">
        <title>Genomic sequence comparison of two unrelated isolates of the human gastric pathogen Helicobacter pylori.</title>
        <authorList>
            <person name="Alm R.A."/>
            <person name="Ling L.-S.L."/>
            <person name="Moir D.T."/>
            <person name="King B.L."/>
            <person name="Brown E.D."/>
            <person name="Doig P.C."/>
            <person name="Smith D.R."/>
            <person name="Noonan B."/>
            <person name="Guild B.C."/>
            <person name="deJonge B.L."/>
            <person name="Carmel G."/>
            <person name="Tummino P.J."/>
            <person name="Caruso A."/>
            <person name="Uria-Nickelsen M."/>
            <person name="Mills D.M."/>
            <person name="Ives C."/>
            <person name="Gibson R."/>
            <person name="Merberg D."/>
            <person name="Mills S.D."/>
            <person name="Jiang Q."/>
            <person name="Taylor D.E."/>
            <person name="Vovis G.F."/>
            <person name="Trust T.J."/>
        </authorList>
    </citation>
    <scope>NUCLEOTIDE SEQUENCE [LARGE SCALE GENOMIC DNA]</scope>
    <source>
        <strain>J99 / ATCC 700824</strain>
    </source>
</reference>
<comment type="subcellular location">
    <subcellularLocation>
        <location evidence="2">Cell membrane</location>
        <topology evidence="2">Multi-pass membrane protein</topology>
    </subcellularLocation>
</comment>
<comment type="similarity">
    <text evidence="2">Belongs to the MscS (TC 1.A.23) family.</text>
</comment>
<proteinExistence type="inferred from homology"/>
<keyword id="KW-1003">Cell membrane</keyword>
<keyword id="KW-0472">Membrane</keyword>
<keyword id="KW-0812">Transmembrane</keyword>
<keyword id="KW-1133">Transmembrane helix</keyword>
<organism>
    <name type="scientific">Helicobacter pylori (strain J99 / ATCC 700824)</name>
    <name type="common">Campylobacter pylori J99</name>
    <dbReference type="NCBI Taxonomy" id="85963"/>
    <lineage>
        <taxon>Bacteria</taxon>
        <taxon>Pseudomonadati</taxon>
        <taxon>Campylobacterota</taxon>
        <taxon>Epsilonproteobacteria</taxon>
        <taxon>Campylobacterales</taxon>
        <taxon>Helicobacteraceae</taxon>
        <taxon>Helicobacter</taxon>
    </lineage>
</organism>
<feature type="chain" id="PRO_0000110250" description="Uncharacterized MscS family protein jhp_0969">
    <location>
        <begin position="1"/>
        <end position="623"/>
    </location>
</feature>
<feature type="transmembrane region" description="Helical" evidence="1">
    <location>
        <begin position="242"/>
        <end position="262"/>
    </location>
</feature>
<feature type="transmembrane region" description="Helical" evidence="1">
    <location>
        <begin position="288"/>
        <end position="308"/>
    </location>
</feature>
<feature type="transmembrane region" description="Helical" evidence="1">
    <location>
        <begin position="318"/>
        <end position="338"/>
    </location>
</feature>
<feature type="transmembrane region" description="Helical" evidence="1">
    <location>
        <begin position="361"/>
        <end position="381"/>
    </location>
</feature>
<feature type="transmembrane region" description="Helical" evidence="1">
    <location>
        <begin position="387"/>
        <end position="407"/>
    </location>
</feature>
<protein>
    <recommendedName>
        <fullName>Uncharacterized MscS family protein jhp_0969</fullName>
    </recommendedName>
</protein>
<evidence type="ECO:0000255" key="1"/>
<evidence type="ECO:0000305" key="2"/>
<gene>
    <name type="ordered locus">jhp_0969</name>
</gene>
<dbReference type="EMBL" id="AE001439">
    <property type="protein sequence ID" value="AAD06551.1"/>
    <property type="molecule type" value="Genomic_DNA"/>
</dbReference>
<dbReference type="PIR" id="C71865">
    <property type="entry name" value="C71865"/>
</dbReference>
<dbReference type="RefSeq" id="WP_001238066.1">
    <property type="nucleotide sequence ID" value="NC_000921.1"/>
</dbReference>
<dbReference type="SMR" id="Q9ZKG7"/>
<dbReference type="KEGG" id="hpj:jhp_0969"/>
<dbReference type="PATRIC" id="fig|85963.30.peg.1625"/>
<dbReference type="eggNOG" id="COG0668">
    <property type="taxonomic scope" value="Bacteria"/>
</dbReference>
<dbReference type="Proteomes" id="UP000000804">
    <property type="component" value="Chromosome"/>
</dbReference>
<dbReference type="GO" id="GO:0005886">
    <property type="term" value="C:plasma membrane"/>
    <property type="evidence" value="ECO:0007669"/>
    <property type="project" value="UniProtKB-SubCell"/>
</dbReference>
<dbReference type="GO" id="GO:0055085">
    <property type="term" value="P:transmembrane transport"/>
    <property type="evidence" value="ECO:0007669"/>
    <property type="project" value="InterPro"/>
</dbReference>
<dbReference type="Gene3D" id="1.10.287.1260">
    <property type="match status" value="1"/>
</dbReference>
<dbReference type="Gene3D" id="2.30.30.60">
    <property type="match status" value="1"/>
</dbReference>
<dbReference type="Gene3D" id="3.30.70.100">
    <property type="match status" value="1"/>
</dbReference>
<dbReference type="InterPro" id="IPR010920">
    <property type="entry name" value="LSM_dom_sf"/>
</dbReference>
<dbReference type="InterPro" id="IPR049142">
    <property type="entry name" value="MS_channel_1st"/>
</dbReference>
<dbReference type="InterPro" id="IPR049278">
    <property type="entry name" value="MS_channel_C"/>
</dbReference>
<dbReference type="InterPro" id="IPR023408">
    <property type="entry name" value="MscS_beta-dom_sf"/>
</dbReference>
<dbReference type="InterPro" id="IPR006685">
    <property type="entry name" value="MscS_channel_2nd"/>
</dbReference>
<dbReference type="InterPro" id="IPR011066">
    <property type="entry name" value="MscS_channel_C_sf"/>
</dbReference>
<dbReference type="InterPro" id="IPR006686">
    <property type="entry name" value="MscS_channel_CS"/>
</dbReference>
<dbReference type="InterPro" id="IPR011014">
    <property type="entry name" value="MscS_channel_TM-2"/>
</dbReference>
<dbReference type="InterPro" id="IPR045042">
    <property type="entry name" value="YnaI-like"/>
</dbReference>
<dbReference type="PANTHER" id="PTHR43634:SF2">
    <property type="entry name" value="LOW CONDUCTANCE MECHANOSENSITIVE CHANNEL YNAI"/>
    <property type="match status" value="1"/>
</dbReference>
<dbReference type="PANTHER" id="PTHR43634">
    <property type="entry name" value="OW CONDUCTANCE MECHANOSENSITIVE CHANNEL"/>
    <property type="match status" value="1"/>
</dbReference>
<dbReference type="Pfam" id="PF21088">
    <property type="entry name" value="MS_channel_1st"/>
    <property type="match status" value="1"/>
</dbReference>
<dbReference type="Pfam" id="PF00924">
    <property type="entry name" value="MS_channel_2nd"/>
    <property type="match status" value="1"/>
</dbReference>
<dbReference type="Pfam" id="PF21082">
    <property type="entry name" value="MS_channel_3rd"/>
    <property type="match status" value="1"/>
</dbReference>
<dbReference type="SUPFAM" id="SSF82689">
    <property type="entry name" value="Mechanosensitive channel protein MscS (YggB), C-terminal domain"/>
    <property type="match status" value="1"/>
</dbReference>
<dbReference type="SUPFAM" id="SSF82861">
    <property type="entry name" value="Mechanosensitive channel protein MscS (YggB), transmembrane region"/>
    <property type="match status" value="1"/>
</dbReference>
<dbReference type="SUPFAM" id="SSF50182">
    <property type="entry name" value="Sm-like ribonucleoproteins"/>
    <property type="match status" value="1"/>
</dbReference>
<dbReference type="PROSITE" id="PS01246">
    <property type="entry name" value="UPF0003"/>
    <property type="match status" value="1"/>
</dbReference>
<name>Y415_HELPJ</name>
<accession>Q9ZKG7</accession>
<sequence>MRLLLWWVLVLSLFLDPLRAVEEHETDAVDLFLIFNQINQLNQVIETYKKNPERSAEISLYNTQKNDLIKSLTSKVLNERDKIGIDINQNLKEQEKIKKRLSKSIKGDDFYTFMKDRLSLDILLIDETLYRFIDKIRSSIDIFSEQKDVESISDAFLLRLGQFKLYTFPKNLGNVKMHELEQMFSDYELRLNTYTEVLRYIKNHPKEVLPKNLIMEVNMDFVLNKISKVLPFTAHSLQVSKIALALMILALLLGLRKLITWLLALLLDRIFEIMQRNKKMHVNVQSSIVSPVSVFLALFSCDVALDIFYYPNASPPKVSMWVGAVYIMLLAWLVIALFKGYGEALVTNVATKSTHNFRKEVINLILKVVYFLIFIVALLGVLKQLGFNVSAIIASLGIGGLAVALAVKDVLANFFASVILLLDNSFSQGDWIVCGEVEGTVVEMGLRRTTIRAFDNALLSVPNSELAGKPIRNWSRRKVGRRIKMEIGLTYSSSQSALQLCVKDIKEMLENHPKIANGADSALQNASDYRYMFKKDIVSIDDFLGYKNNLFVFLDQFADSSINILVYCFSKTVVWEEWLEVKEDVMLKIMGIVEKHHLSFAFPSQSLYVESLPEVSLKEGAKI</sequence>